<reference key="1">
    <citation type="submission" date="2005-08" db="EMBL/GenBank/DDBJ databases">
        <title>Complete sequence of chromosome 1 of Nitrosospira multiformis ATCC 25196.</title>
        <authorList>
            <person name="Copeland A."/>
            <person name="Lucas S."/>
            <person name="Lapidus A."/>
            <person name="Barry K."/>
            <person name="Detter J.C."/>
            <person name="Glavina T."/>
            <person name="Hammon N."/>
            <person name="Israni S."/>
            <person name="Pitluck S."/>
            <person name="Chain P."/>
            <person name="Malfatti S."/>
            <person name="Shin M."/>
            <person name="Vergez L."/>
            <person name="Schmutz J."/>
            <person name="Larimer F."/>
            <person name="Land M."/>
            <person name="Hauser L."/>
            <person name="Kyrpides N."/>
            <person name="Lykidis A."/>
            <person name="Richardson P."/>
        </authorList>
    </citation>
    <scope>NUCLEOTIDE SEQUENCE [LARGE SCALE GENOMIC DNA]</scope>
    <source>
        <strain>ATCC 25196 / NCIMB 11849 / C 71</strain>
    </source>
</reference>
<sequence>MKTPIRVAVTGAAGQIAYSLLFRIAAGDMLGEDQPVILQLLDIPQSLPSLKGVVMELDDCAFPLLRDITITDDPKTAFRDINIAMLVGARPRTKGMERKDLLEANGTIFRAQGKALDEVAGRDVKVLVVGNPANTNAYITMKNAPSLKPTSFSSMMRLDHNRAVFQLAVKVGQPVSSVRKMIVWGNHSSAQYPDLSHAEVDGHNAADLVNDMAWIETGFIPVIQKRGMEVIEARGSSSAASAANAAICHMRDWVSGTPEGDWVSMGIPSDGSYGIPEGVIYGYPVTCQGGEYKIVPDLEISEFSRMKMQASYRELMGERESIKHLLG</sequence>
<organism>
    <name type="scientific">Nitrosospira multiformis (strain ATCC 25196 / NCIMB 11849 / C 71)</name>
    <dbReference type="NCBI Taxonomy" id="323848"/>
    <lineage>
        <taxon>Bacteria</taxon>
        <taxon>Pseudomonadati</taxon>
        <taxon>Pseudomonadota</taxon>
        <taxon>Betaproteobacteria</taxon>
        <taxon>Nitrosomonadales</taxon>
        <taxon>Nitrosomonadaceae</taxon>
        <taxon>Nitrosospira</taxon>
    </lineage>
</organism>
<accession>Q2YAQ4</accession>
<name>MDH_NITMU</name>
<proteinExistence type="inferred from homology"/>
<feature type="chain" id="PRO_0000294396" description="Malate dehydrogenase">
    <location>
        <begin position="1"/>
        <end position="327"/>
    </location>
</feature>
<feature type="active site" description="Proton acceptor" evidence="1">
    <location>
        <position position="187"/>
    </location>
</feature>
<feature type="binding site" evidence="1">
    <location>
        <begin position="11"/>
        <end position="17"/>
    </location>
    <ligand>
        <name>NAD(+)</name>
        <dbReference type="ChEBI" id="CHEBI:57540"/>
    </ligand>
</feature>
<feature type="binding site" evidence="1">
    <location>
        <position position="92"/>
    </location>
    <ligand>
        <name>substrate</name>
    </ligand>
</feature>
<feature type="binding site" evidence="1">
    <location>
        <position position="98"/>
    </location>
    <ligand>
        <name>substrate</name>
    </ligand>
</feature>
<feature type="binding site" evidence="1">
    <location>
        <position position="105"/>
    </location>
    <ligand>
        <name>NAD(+)</name>
        <dbReference type="ChEBI" id="CHEBI:57540"/>
    </ligand>
</feature>
<feature type="binding site" evidence="1">
    <location>
        <position position="112"/>
    </location>
    <ligand>
        <name>NAD(+)</name>
        <dbReference type="ChEBI" id="CHEBI:57540"/>
    </ligand>
</feature>
<feature type="binding site" evidence="1">
    <location>
        <begin position="129"/>
        <end position="131"/>
    </location>
    <ligand>
        <name>NAD(+)</name>
        <dbReference type="ChEBI" id="CHEBI:57540"/>
    </ligand>
</feature>
<feature type="binding site" evidence="1">
    <location>
        <position position="131"/>
    </location>
    <ligand>
        <name>substrate</name>
    </ligand>
</feature>
<feature type="binding site" evidence="1">
    <location>
        <position position="162"/>
    </location>
    <ligand>
        <name>substrate</name>
    </ligand>
</feature>
<dbReference type="EC" id="1.1.1.37" evidence="1"/>
<dbReference type="EMBL" id="CP000103">
    <property type="protein sequence ID" value="ABB74167.1"/>
    <property type="molecule type" value="Genomic_DNA"/>
</dbReference>
<dbReference type="RefSeq" id="WP_011380212.1">
    <property type="nucleotide sequence ID" value="NC_007614.1"/>
</dbReference>
<dbReference type="SMR" id="Q2YAQ4"/>
<dbReference type="STRING" id="323848.Nmul_A0864"/>
<dbReference type="KEGG" id="nmu:Nmul_A0864"/>
<dbReference type="eggNOG" id="COG0039">
    <property type="taxonomic scope" value="Bacteria"/>
</dbReference>
<dbReference type="HOGENOM" id="CLU_040727_2_0_4"/>
<dbReference type="OrthoDB" id="9802969at2"/>
<dbReference type="Proteomes" id="UP000002718">
    <property type="component" value="Chromosome"/>
</dbReference>
<dbReference type="GO" id="GO:0030060">
    <property type="term" value="F:L-malate dehydrogenase (NAD+) activity"/>
    <property type="evidence" value="ECO:0007669"/>
    <property type="project" value="UniProtKB-UniRule"/>
</dbReference>
<dbReference type="GO" id="GO:0006108">
    <property type="term" value="P:malate metabolic process"/>
    <property type="evidence" value="ECO:0007669"/>
    <property type="project" value="InterPro"/>
</dbReference>
<dbReference type="GO" id="GO:0006099">
    <property type="term" value="P:tricarboxylic acid cycle"/>
    <property type="evidence" value="ECO:0007669"/>
    <property type="project" value="UniProtKB-UniRule"/>
</dbReference>
<dbReference type="CDD" id="cd01338">
    <property type="entry name" value="MDH_chloroplast-like"/>
    <property type="match status" value="1"/>
</dbReference>
<dbReference type="FunFam" id="3.40.50.720:FF:000010">
    <property type="entry name" value="Malate dehydrogenase"/>
    <property type="match status" value="1"/>
</dbReference>
<dbReference type="FunFam" id="3.90.110.10:FF:000002">
    <property type="entry name" value="Malate dehydrogenase"/>
    <property type="match status" value="1"/>
</dbReference>
<dbReference type="Gene3D" id="3.90.110.10">
    <property type="entry name" value="Lactate dehydrogenase/glycoside hydrolase, family 4, C-terminal"/>
    <property type="match status" value="1"/>
</dbReference>
<dbReference type="Gene3D" id="3.40.50.720">
    <property type="entry name" value="NAD(P)-binding Rossmann-like Domain"/>
    <property type="match status" value="1"/>
</dbReference>
<dbReference type="HAMAP" id="MF_01517">
    <property type="entry name" value="Malate_dehydrog_2"/>
    <property type="match status" value="1"/>
</dbReference>
<dbReference type="InterPro" id="IPR001557">
    <property type="entry name" value="L-lactate/malate_DH"/>
</dbReference>
<dbReference type="InterPro" id="IPR022383">
    <property type="entry name" value="Lactate/malate_DH_C"/>
</dbReference>
<dbReference type="InterPro" id="IPR001236">
    <property type="entry name" value="Lactate/malate_DH_N"/>
</dbReference>
<dbReference type="InterPro" id="IPR015955">
    <property type="entry name" value="Lactate_DH/Glyco_Ohase_4_C"/>
</dbReference>
<dbReference type="InterPro" id="IPR010945">
    <property type="entry name" value="Malate_DH_type2"/>
</dbReference>
<dbReference type="InterPro" id="IPR036291">
    <property type="entry name" value="NAD(P)-bd_dom_sf"/>
</dbReference>
<dbReference type="NCBIfam" id="TIGR01759">
    <property type="entry name" value="MalateDH-SF1"/>
    <property type="match status" value="1"/>
</dbReference>
<dbReference type="NCBIfam" id="NF003916">
    <property type="entry name" value="PRK05442.1"/>
    <property type="match status" value="1"/>
</dbReference>
<dbReference type="PANTHER" id="PTHR23382">
    <property type="entry name" value="MALATE DEHYDROGENASE"/>
    <property type="match status" value="1"/>
</dbReference>
<dbReference type="Pfam" id="PF02866">
    <property type="entry name" value="Ldh_1_C"/>
    <property type="match status" value="1"/>
</dbReference>
<dbReference type="Pfam" id="PF00056">
    <property type="entry name" value="Ldh_1_N"/>
    <property type="match status" value="1"/>
</dbReference>
<dbReference type="PIRSF" id="PIRSF000102">
    <property type="entry name" value="Lac_mal_DH"/>
    <property type="match status" value="1"/>
</dbReference>
<dbReference type="SUPFAM" id="SSF56327">
    <property type="entry name" value="LDH C-terminal domain-like"/>
    <property type="match status" value="1"/>
</dbReference>
<dbReference type="SUPFAM" id="SSF51735">
    <property type="entry name" value="NAD(P)-binding Rossmann-fold domains"/>
    <property type="match status" value="1"/>
</dbReference>
<evidence type="ECO:0000255" key="1">
    <source>
        <dbReference type="HAMAP-Rule" id="MF_01517"/>
    </source>
</evidence>
<keyword id="KW-0520">NAD</keyword>
<keyword id="KW-0560">Oxidoreductase</keyword>
<keyword id="KW-1185">Reference proteome</keyword>
<keyword id="KW-0816">Tricarboxylic acid cycle</keyword>
<gene>
    <name evidence="1" type="primary">mdh</name>
    <name type="ordered locus">Nmul_A0864</name>
</gene>
<comment type="function">
    <text evidence="1">Catalyzes the reversible oxidation of malate to oxaloacetate.</text>
</comment>
<comment type="catalytic activity">
    <reaction evidence="1">
        <text>(S)-malate + NAD(+) = oxaloacetate + NADH + H(+)</text>
        <dbReference type="Rhea" id="RHEA:21432"/>
        <dbReference type="ChEBI" id="CHEBI:15378"/>
        <dbReference type="ChEBI" id="CHEBI:15589"/>
        <dbReference type="ChEBI" id="CHEBI:16452"/>
        <dbReference type="ChEBI" id="CHEBI:57540"/>
        <dbReference type="ChEBI" id="CHEBI:57945"/>
        <dbReference type="EC" id="1.1.1.37"/>
    </reaction>
</comment>
<comment type="similarity">
    <text evidence="1">Belongs to the LDH/MDH superfamily. MDH type 2 family.</text>
</comment>
<protein>
    <recommendedName>
        <fullName evidence="1">Malate dehydrogenase</fullName>
        <ecNumber evidence="1">1.1.1.37</ecNumber>
    </recommendedName>
</protein>